<reference key="1">
    <citation type="submission" date="2006-03" db="EMBL/GenBank/DDBJ databases">
        <title>Complete sequence of Rhodopseudomonas palustris BisB5.</title>
        <authorList>
            <consortium name="US DOE Joint Genome Institute"/>
            <person name="Copeland A."/>
            <person name="Lucas S."/>
            <person name="Lapidus A."/>
            <person name="Barry K."/>
            <person name="Detter J.C."/>
            <person name="Glavina del Rio T."/>
            <person name="Hammon N."/>
            <person name="Israni S."/>
            <person name="Dalin E."/>
            <person name="Tice H."/>
            <person name="Pitluck S."/>
            <person name="Chain P."/>
            <person name="Malfatti S."/>
            <person name="Shin M."/>
            <person name="Vergez L."/>
            <person name="Schmutz J."/>
            <person name="Larimer F."/>
            <person name="Land M."/>
            <person name="Hauser L."/>
            <person name="Pelletier D.A."/>
            <person name="Kyrpides N."/>
            <person name="Lykidis A."/>
            <person name="Oda Y."/>
            <person name="Harwood C.S."/>
            <person name="Richardson P."/>
        </authorList>
    </citation>
    <scope>NUCLEOTIDE SEQUENCE [LARGE SCALE GENOMIC DNA]</scope>
    <source>
        <strain>BisB5</strain>
    </source>
</reference>
<accession>Q13BJ4</accession>
<gene>
    <name evidence="1" type="primary">pdxH</name>
    <name type="ordered locus">RPD_1307</name>
</gene>
<proteinExistence type="inferred from homology"/>
<comment type="function">
    <text evidence="1">Catalyzes the oxidation of either pyridoxine 5'-phosphate (PNP) or pyridoxamine 5'-phosphate (PMP) into pyridoxal 5'-phosphate (PLP).</text>
</comment>
<comment type="catalytic activity">
    <reaction evidence="1">
        <text>pyridoxamine 5'-phosphate + O2 + H2O = pyridoxal 5'-phosphate + H2O2 + NH4(+)</text>
        <dbReference type="Rhea" id="RHEA:15817"/>
        <dbReference type="ChEBI" id="CHEBI:15377"/>
        <dbReference type="ChEBI" id="CHEBI:15379"/>
        <dbReference type="ChEBI" id="CHEBI:16240"/>
        <dbReference type="ChEBI" id="CHEBI:28938"/>
        <dbReference type="ChEBI" id="CHEBI:58451"/>
        <dbReference type="ChEBI" id="CHEBI:597326"/>
        <dbReference type="EC" id="1.4.3.5"/>
    </reaction>
</comment>
<comment type="catalytic activity">
    <reaction evidence="1">
        <text>pyridoxine 5'-phosphate + O2 = pyridoxal 5'-phosphate + H2O2</text>
        <dbReference type="Rhea" id="RHEA:15149"/>
        <dbReference type="ChEBI" id="CHEBI:15379"/>
        <dbReference type="ChEBI" id="CHEBI:16240"/>
        <dbReference type="ChEBI" id="CHEBI:58589"/>
        <dbReference type="ChEBI" id="CHEBI:597326"/>
        <dbReference type="EC" id="1.4.3.5"/>
    </reaction>
</comment>
<comment type="cofactor">
    <cofactor evidence="1">
        <name>FMN</name>
        <dbReference type="ChEBI" id="CHEBI:58210"/>
    </cofactor>
    <text evidence="1">Binds 1 FMN per subunit.</text>
</comment>
<comment type="pathway">
    <text evidence="1">Cofactor metabolism; pyridoxal 5'-phosphate salvage; pyridoxal 5'-phosphate from pyridoxamine 5'-phosphate: step 1/1.</text>
</comment>
<comment type="pathway">
    <text evidence="1">Cofactor metabolism; pyridoxal 5'-phosphate salvage; pyridoxal 5'-phosphate from pyridoxine 5'-phosphate: step 1/1.</text>
</comment>
<comment type="subunit">
    <text evidence="1">Homodimer.</text>
</comment>
<comment type="similarity">
    <text evidence="1">Belongs to the pyridoxamine 5'-phosphate oxidase family.</text>
</comment>
<organism>
    <name type="scientific">Rhodopseudomonas palustris (strain BisB5)</name>
    <dbReference type="NCBI Taxonomy" id="316057"/>
    <lineage>
        <taxon>Bacteria</taxon>
        <taxon>Pseudomonadati</taxon>
        <taxon>Pseudomonadota</taxon>
        <taxon>Alphaproteobacteria</taxon>
        <taxon>Hyphomicrobiales</taxon>
        <taxon>Nitrobacteraceae</taxon>
        <taxon>Rhodopseudomonas</taxon>
    </lineage>
</organism>
<protein>
    <recommendedName>
        <fullName evidence="1">Pyridoxine/pyridoxamine 5'-phosphate oxidase</fullName>
        <ecNumber evidence="1">1.4.3.5</ecNumber>
    </recommendedName>
    <alternativeName>
        <fullName evidence="1">PNP/PMP oxidase</fullName>
        <shortName evidence="1">PNPOx</shortName>
    </alternativeName>
    <alternativeName>
        <fullName evidence="1">Pyridoxal 5'-phosphate synthase</fullName>
    </alternativeName>
</protein>
<sequence length="212" mass="24092">MSDTSIQQQSQLTSGDFTAAENPFALFAEWFADANESELNDPNAMALATVDPDGLPDVRMVLMKGYDTDGFVFYSHIASQKGRELAANPKAALLFHWKSLRRQVRIRGAVSAVTETEADDYFATRPKQAQIGAWASKQSQPLESRFAFEQAIAKVAARYLVGEVPRPPGWSGWRITPLRFEFWHDRPFRLHDRIEFSRDTPAQPWIKTRLYP</sequence>
<dbReference type="EC" id="1.4.3.5" evidence="1"/>
<dbReference type="EMBL" id="CP000283">
    <property type="protein sequence ID" value="ABE38545.1"/>
    <property type="molecule type" value="Genomic_DNA"/>
</dbReference>
<dbReference type="SMR" id="Q13BJ4"/>
<dbReference type="STRING" id="316057.RPD_1307"/>
<dbReference type="KEGG" id="rpd:RPD_1307"/>
<dbReference type="eggNOG" id="COG0259">
    <property type="taxonomic scope" value="Bacteria"/>
</dbReference>
<dbReference type="HOGENOM" id="CLU_032263_2_2_5"/>
<dbReference type="BioCyc" id="RPAL316057:RPD_RS06620-MONOMER"/>
<dbReference type="UniPathway" id="UPA01068">
    <property type="reaction ID" value="UER00304"/>
</dbReference>
<dbReference type="UniPathway" id="UPA01068">
    <property type="reaction ID" value="UER00305"/>
</dbReference>
<dbReference type="Proteomes" id="UP000001818">
    <property type="component" value="Chromosome"/>
</dbReference>
<dbReference type="GO" id="GO:0010181">
    <property type="term" value="F:FMN binding"/>
    <property type="evidence" value="ECO:0007669"/>
    <property type="project" value="UniProtKB-UniRule"/>
</dbReference>
<dbReference type="GO" id="GO:0004733">
    <property type="term" value="F:pyridoxamine phosphate oxidase activity"/>
    <property type="evidence" value="ECO:0007669"/>
    <property type="project" value="UniProtKB-UniRule"/>
</dbReference>
<dbReference type="GO" id="GO:0008615">
    <property type="term" value="P:pyridoxine biosynthetic process"/>
    <property type="evidence" value="ECO:0007669"/>
    <property type="project" value="UniProtKB-KW"/>
</dbReference>
<dbReference type="FunFam" id="2.30.110.10:FF:000012">
    <property type="entry name" value="Predicted protein"/>
    <property type="match status" value="1"/>
</dbReference>
<dbReference type="Gene3D" id="2.30.110.10">
    <property type="entry name" value="Electron Transport, Fmn-binding Protein, Chain A"/>
    <property type="match status" value="1"/>
</dbReference>
<dbReference type="HAMAP" id="MF_01629">
    <property type="entry name" value="PdxH"/>
    <property type="match status" value="1"/>
</dbReference>
<dbReference type="InterPro" id="IPR000659">
    <property type="entry name" value="Pyridox_Oxase"/>
</dbReference>
<dbReference type="InterPro" id="IPR019740">
    <property type="entry name" value="Pyridox_Oxase_CS"/>
</dbReference>
<dbReference type="InterPro" id="IPR011576">
    <property type="entry name" value="Pyridox_Oxase_N"/>
</dbReference>
<dbReference type="InterPro" id="IPR019576">
    <property type="entry name" value="Pyridoxamine_oxidase_dimer_C"/>
</dbReference>
<dbReference type="InterPro" id="IPR012349">
    <property type="entry name" value="Split_barrel_FMN-bd"/>
</dbReference>
<dbReference type="NCBIfam" id="TIGR00558">
    <property type="entry name" value="pdxH"/>
    <property type="match status" value="1"/>
</dbReference>
<dbReference type="NCBIfam" id="NF004231">
    <property type="entry name" value="PRK05679.1"/>
    <property type="match status" value="1"/>
</dbReference>
<dbReference type="PANTHER" id="PTHR10851:SF0">
    <property type="entry name" value="PYRIDOXINE-5'-PHOSPHATE OXIDASE"/>
    <property type="match status" value="1"/>
</dbReference>
<dbReference type="PANTHER" id="PTHR10851">
    <property type="entry name" value="PYRIDOXINE-5-PHOSPHATE OXIDASE"/>
    <property type="match status" value="1"/>
</dbReference>
<dbReference type="Pfam" id="PF10590">
    <property type="entry name" value="PNP_phzG_C"/>
    <property type="match status" value="1"/>
</dbReference>
<dbReference type="Pfam" id="PF01243">
    <property type="entry name" value="PNPOx_N"/>
    <property type="match status" value="1"/>
</dbReference>
<dbReference type="PIRSF" id="PIRSF000190">
    <property type="entry name" value="Pyd_amn-ph_oxd"/>
    <property type="match status" value="1"/>
</dbReference>
<dbReference type="SUPFAM" id="SSF50475">
    <property type="entry name" value="FMN-binding split barrel"/>
    <property type="match status" value="1"/>
</dbReference>
<dbReference type="PROSITE" id="PS01064">
    <property type="entry name" value="PYRIDOX_OXIDASE"/>
    <property type="match status" value="1"/>
</dbReference>
<evidence type="ECO:0000255" key="1">
    <source>
        <dbReference type="HAMAP-Rule" id="MF_01629"/>
    </source>
</evidence>
<feature type="chain" id="PRO_0000292322" description="Pyridoxine/pyridoxamine 5'-phosphate oxidase">
    <location>
        <begin position="1"/>
        <end position="212"/>
    </location>
</feature>
<feature type="binding site" evidence="1">
    <location>
        <begin position="59"/>
        <end position="64"/>
    </location>
    <ligand>
        <name>FMN</name>
        <dbReference type="ChEBI" id="CHEBI:58210"/>
    </ligand>
</feature>
<feature type="binding site" evidence="1">
    <location>
        <position position="64"/>
    </location>
    <ligand>
        <name>substrate</name>
    </ligand>
</feature>
<feature type="binding site" evidence="1">
    <location>
        <begin position="74"/>
        <end position="75"/>
    </location>
    <ligand>
        <name>FMN</name>
        <dbReference type="ChEBI" id="CHEBI:58210"/>
    </ligand>
</feature>
<feature type="binding site" evidence="1">
    <location>
        <position position="81"/>
    </location>
    <ligand>
        <name>FMN</name>
        <dbReference type="ChEBI" id="CHEBI:58210"/>
    </ligand>
</feature>
<feature type="binding site" evidence="1">
    <location>
        <position position="103"/>
    </location>
    <ligand>
        <name>FMN</name>
        <dbReference type="ChEBI" id="CHEBI:58210"/>
    </ligand>
</feature>
<feature type="binding site" evidence="1">
    <location>
        <position position="121"/>
    </location>
    <ligand>
        <name>substrate</name>
    </ligand>
</feature>
<feature type="binding site" evidence="1">
    <location>
        <position position="125"/>
    </location>
    <ligand>
        <name>substrate</name>
    </ligand>
</feature>
<feature type="binding site" evidence="1">
    <location>
        <begin position="138"/>
        <end position="139"/>
    </location>
    <ligand>
        <name>FMN</name>
        <dbReference type="ChEBI" id="CHEBI:58210"/>
    </ligand>
</feature>
<feature type="binding site" evidence="1">
    <location>
        <position position="183"/>
    </location>
    <ligand>
        <name>FMN</name>
        <dbReference type="ChEBI" id="CHEBI:58210"/>
    </ligand>
</feature>
<feature type="binding site" evidence="1">
    <location>
        <begin position="189"/>
        <end position="191"/>
    </location>
    <ligand>
        <name>substrate</name>
    </ligand>
</feature>
<feature type="binding site" evidence="1">
    <location>
        <position position="193"/>
    </location>
    <ligand>
        <name>FMN</name>
        <dbReference type="ChEBI" id="CHEBI:58210"/>
    </ligand>
</feature>
<name>PDXH_RHOPS</name>
<keyword id="KW-0285">Flavoprotein</keyword>
<keyword id="KW-0288">FMN</keyword>
<keyword id="KW-0560">Oxidoreductase</keyword>
<keyword id="KW-0664">Pyridoxine biosynthesis</keyword>